<proteinExistence type="inferred from homology"/>
<organism>
    <name type="scientific">Stutzerimonas stutzeri (strain A1501)</name>
    <name type="common">Pseudomonas stutzeri</name>
    <dbReference type="NCBI Taxonomy" id="379731"/>
    <lineage>
        <taxon>Bacteria</taxon>
        <taxon>Pseudomonadati</taxon>
        <taxon>Pseudomonadota</taxon>
        <taxon>Gammaproteobacteria</taxon>
        <taxon>Pseudomonadales</taxon>
        <taxon>Pseudomonadaceae</taxon>
        <taxon>Stutzerimonas</taxon>
    </lineage>
</organism>
<reference key="1">
    <citation type="journal article" date="2008" name="Proc. Natl. Acad. Sci. U.S.A.">
        <title>Nitrogen fixation island and rhizosphere competence traits in the genome of root-associated Pseudomonas stutzeri A1501.</title>
        <authorList>
            <person name="Yan Y."/>
            <person name="Yang J."/>
            <person name="Dou Y."/>
            <person name="Chen M."/>
            <person name="Ping S."/>
            <person name="Peng J."/>
            <person name="Lu W."/>
            <person name="Zhang W."/>
            <person name="Yao Z."/>
            <person name="Li H."/>
            <person name="Liu W."/>
            <person name="He S."/>
            <person name="Geng L."/>
            <person name="Zhang X."/>
            <person name="Yang F."/>
            <person name="Yu H."/>
            <person name="Zhan Y."/>
            <person name="Li D."/>
            <person name="Lin Z."/>
            <person name="Wang Y."/>
            <person name="Elmerich C."/>
            <person name="Lin M."/>
            <person name="Jin Q."/>
        </authorList>
    </citation>
    <scope>NUCLEOTIDE SEQUENCE [LARGE SCALE GENOMIC DNA]</scope>
    <source>
        <strain>A1501</strain>
    </source>
</reference>
<feature type="chain" id="PRO_0000297454" description="Erythronate-4-phosphate dehydrogenase">
    <location>
        <begin position="1"/>
        <end position="381"/>
    </location>
</feature>
<feature type="active site" evidence="1">
    <location>
        <position position="207"/>
    </location>
</feature>
<feature type="active site" evidence="1">
    <location>
        <position position="236"/>
    </location>
</feature>
<feature type="active site" description="Proton donor" evidence="1">
    <location>
        <position position="253"/>
    </location>
</feature>
<feature type="binding site" evidence="1">
    <location>
        <position position="45"/>
    </location>
    <ligand>
        <name>substrate</name>
    </ligand>
</feature>
<feature type="binding site" evidence="1">
    <location>
        <position position="66"/>
    </location>
    <ligand>
        <name>substrate</name>
    </ligand>
</feature>
<feature type="binding site" evidence="1">
    <location>
        <position position="146"/>
    </location>
    <ligand>
        <name>NAD(+)</name>
        <dbReference type="ChEBI" id="CHEBI:57540"/>
    </ligand>
</feature>
<feature type="binding site" evidence="1">
    <location>
        <position position="174"/>
    </location>
    <ligand>
        <name>NAD(+)</name>
        <dbReference type="ChEBI" id="CHEBI:57540"/>
    </ligand>
</feature>
<feature type="binding site" evidence="1">
    <location>
        <begin position="205"/>
        <end position="207"/>
    </location>
    <ligand>
        <name>NAD(+)</name>
        <dbReference type="ChEBI" id="CHEBI:57540"/>
    </ligand>
</feature>
<feature type="binding site" evidence="1">
    <location>
        <position position="231"/>
    </location>
    <ligand>
        <name>NAD(+)</name>
        <dbReference type="ChEBI" id="CHEBI:57540"/>
    </ligand>
</feature>
<feature type="binding site" evidence="1">
    <location>
        <position position="256"/>
    </location>
    <ligand>
        <name>NAD(+)</name>
        <dbReference type="ChEBI" id="CHEBI:57540"/>
    </ligand>
</feature>
<feature type="binding site" evidence="1">
    <location>
        <position position="257"/>
    </location>
    <ligand>
        <name>substrate</name>
    </ligand>
</feature>
<name>PDXB_STUS1</name>
<protein>
    <recommendedName>
        <fullName evidence="1">Erythronate-4-phosphate dehydrogenase</fullName>
        <ecNumber evidence="1">1.1.1.290</ecNumber>
    </recommendedName>
</protein>
<gene>
    <name evidence="1" type="primary">pdxB</name>
    <name type="ordered locus">PST_1818</name>
</gene>
<dbReference type="EC" id="1.1.1.290" evidence="1"/>
<dbReference type="EMBL" id="CP000304">
    <property type="protein sequence ID" value="ABP79492.1"/>
    <property type="molecule type" value="Genomic_DNA"/>
</dbReference>
<dbReference type="RefSeq" id="WP_011912969.1">
    <property type="nucleotide sequence ID" value="NC_009434.1"/>
</dbReference>
<dbReference type="SMR" id="A4VKJ1"/>
<dbReference type="KEGG" id="psa:PST_1818"/>
<dbReference type="eggNOG" id="COG0111">
    <property type="taxonomic scope" value="Bacteria"/>
</dbReference>
<dbReference type="HOGENOM" id="CLU_019796_4_0_6"/>
<dbReference type="UniPathway" id="UPA00244">
    <property type="reaction ID" value="UER00310"/>
</dbReference>
<dbReference type="Proteomes" id="UP000000233">
    <property type="component" value="Chromosome"/>
</dbReference>
<dbReference type="GO" id="GO:0005829">
    <property type="term" value="C:cytosol"/>
    <property type="evidence" value="ECO:0007669"/>
    <property type="project" value="TreeGrafter"/>
</dbReference>
<dbReference type="GO" id="GO:0033711">
    <property type="term" value="F:4-phosphoerythronate dehydrogenase activity"/>
    <property type="evidence" value="ECO:0007669"/>
    <property type="project" value="UniProtKB-EC"/>
</dbReference>
<dbReference type="GO" id="GO:0051287">
    <property type="term" value="F:NAD binding"/>
    <property type="evidence" value="ECO:0007669"/>
    <property type="project" value="InterPro"/>
</dbReference>
<dbReference type="GO" id="GO:0046983">
    <property type="term" value="F:protein dimerization activity"/>
    <property type="evidence" value="ECO:0007669"/>
    <property type="project" value="InterPro"/>
</dbReference>
<dbReference type="GO" id="GO:0036001">
    <property type="term" value="P:'de novo' pyridoxal 5'-phosphate biosynthetic process"/>
    <property type="evidence" value="ECO:0007669"/>
    <property type="project" value="TreeGrafter"/>
</dbReference>
<dbReference type="GO" id="GO:0008615">
    <property type="term" value="P:pyridoxine biosynthetic process"/>
    <property type="evidence" value="ECO:0007669"/>
    <property type="project" value="UniProtKB-UniRule"/>
</dbReference>
<dbReference type="CDD" id="cd12158">
    <property type="entry name" value="ErythrP_dh"/>
    <property type="match status" value="1"/>
</dbReference>
<dbReference type="Gene3D" id="3.30.1370.170">
    <property type="match status" value="1"/>
</dbReference>
<dbReference type="Gene3D" id="3.40.50.720">
    <property type="entry name" value="NAD(P)-binding Rossmann-like Domain"/>
    <property type="match status" value="2"/>
</dbReference>
<dbReference type="HAMAP" id="MF_01825">
    <property type="entry name" value="PdxB"/>
    <property type="match status" value="1"/>
</dbReference>
<dbReference type="InterPro" id="IPR006139">
    <property type="entry name" value="D-isomer_2_OHA_DH_cat_dom"/>
</dbReference>
<dbReference type="InterPro" id="IPR029753">
    <property type="entry name" value="D-isomer_DH_CS"/>
</dbReference>
<dbReference type="InterPro" id="IPR006140">
    <property type="entry name" value="D-isomer_DH_NAD-bd"/>
</dbReference>
<dbReference type="InterPro" id="IPR020921">
    <property type="entry name" value="Erythronate-4-P_DHase"/>
</dbReference>
<dbReference type="InterPro" id="IPR024531">
    <property type="entry name" value="Erythronate-4-P_DHase_dimer"/>
</dbReference>
<dbReference type="InterPro" id="IPR036291">
    <property type="entry name" value="NAD(P)-bd_dom_sf"/>
</dbReference>
<dbReference type="InterPro" id="IPR038251">
    <property type="entry name" value="PdxB_dimer_sf"/>
</dbReference>
<dbReference type="NCBIfam" id="NF001309">
    <property type="entry name" value="PRK00257.1"/>
    <property type="match status" value="1"/>
</dbReference>
<dbReference type="PANTHER" id="PTHR42938">
    <property type="entry name" value="FORMATE DEHYDROGENASE 1"/>
    <property type="match status" value="1"/>
</dbReference>
<dbReference type="PANTHER" id="PTHR42938:SF9">
    <property type="entry name" value="FORMATE DEHYDROGENASE 1"/>
    <property type="match status" value="1"/>
</dbReference>
<dbReference type="Pfam" id="PF00389">
    <property type="entry name" value="2-Hacid_dh"/>
    <property type="match status" value="1"/>
</dbReference>
<dbReference type="Pfam" id="PF02826">
    <property type="entry name" value="2-Hacid_dh_C"/>
    <property type="match status" value="1"/>
</dbReference>
<dbReference type="Pfam" id="PF11890">
    <property type="entry name" value="DUF3410"/>
    <property type="match status" value="1"/>
</dbReference>
<dbReference type="SUPFAM" id="SSF52283">
    <property type="entry name" value="Formate/glycerate dehydrogenase catalytic domain-like"/>
    <property type="match status" value="1"/>
</dbReference>
<dbReference type="SUPFAM" id="SSF51735">
    <property type="entry name" value="NAD(P)-binding Rossmann-fold domains"/>
    <property type="match status" value="1"/>
</dbReference>
<dbReference type="PROSITE" id="PS00671">
    <property type="entry name" value="D_2_HYDROXYACID_DH_3"/>
    <property type="match status" value="1"/>
</dbReference>
<evidence type="ECO:0000255" key="1">
    <source>
        <dbReference type="HAMAP-Rule" id="MF_01825"/>
    </source>
</evidence>
<accession>A4VKJ1</accession>
<comment type="function">
    <text evidence="1">Catalyzes the oxidation of erythronate-4-phosphate to 3-hydroxy-2-oxo-4-phosphonooxybutanoate.</text>
</comment>
<comment type="catalytic activity">
    <reaction evidence="1">
        <text>4-phospho-D-erythronate + NAD(+) = (R)-3-hydroxy-2-oxo-4-phosphooxybutanoate + NADH + H(+)</text>
        <dbReference type="Rhea" id="RHEA:18829"/>
        <dbReference type="ChEBI" id="CHEBI:15378"/>
        <dbReference type="ChEBI" id="CHEBI:57540"/>
        <dbReference type="ChEBI" id="CHEBI:57945"/>
        <dbReference type="ChEBI" id="CHEBI:58538"/>
        <dbReference type="ChEBI" id="CHEBI:58766"/>
        <dbReference type="EC" id="1.1.1.290"/>
    </reaction>
</comment>
<comment type="pathway">
    <text evidence="1">Cofactor biosynthesis; pyridoxine 5'-phosphate biosynthesis; pyridoxine 5'-phosphate from D-erythrose 4-phosphate: step 2/5.</text>
</comment>
<comment type="subunit">
    <text evidence="1">Homodimer.</text>
</comment>
<comment type="subcellular location">
    <subcellularLocation>
        <location evidence="1">Cytoplasm</location>
    </subcellularLocation>
</comment>
<comment type="similarity">
    <text evidence="1">Belongs to the D-isomer specific 2-hydroxyacid dehydrogenase family. PdxB subfamily.</text>
</comment>
<keyword id="KW-0963">Cytoplasm</keyword>
<keyword id="KW-0520">NAD</keyword>
<keyword id="KW-0560">Oxidoreductase</keyword>
<keyword id="KW-0664">Pyridoxine biosynthesis</keyword>
<keyword id="KW-1185">Reference proteome</keyword>
<sequence>MHILADENIPLVDEFFAGLGEIRRMPGRRINRAALEGVDVLLVRSVTRVDRELLQGTAVRFVGTCTIGTDHLDLDYFEQSGIDWASAPGCNARGVVDYVLGCLLALAEVRGEALARRRFGVVGAGEVGGRLVEVLRGLGWDVRVCDPPRQTREAGGFVTLDEVIAECDVISLHTPLSMSGDCPTFHLFDRQRLSGLRPGAWLINASRGAVVDNAALRDLLLQRPDLEAVLDVWEGEPQVDVELADLCRIATPHIAGYSLDGKLRGTAQIHAAYCAARGLEPTVELAQLMPGPALAGLTFAASAEPAEMLATLCRAVYDPRRDDADFRRSLQGDDAQRRAAFDLLRKAYPARREIDGLAVRIEGDNPALTAVVSALGARLLR</sequence>